<comment type="function">
    <text evidence="1">CRISPR (clustered regularly interspaced short palindromic repeat), is an adaptive immune system that provides protection against mobile genetic elements (viruses, transposable elements and conjugative plasmids). CRISPR clusters contain spacers, sequences complementary to antecedent mobile elements, and target invading nucleic acids. CRISPR clusters are transcribed and processed into CRISPR RNA (crRNA). Acts as a dsDNA endonuclease. Involved in the integration of spacer DNA into the CRISPR cassette.</text>
</comment>
<comment type="cofactor">
    <cofactor evidence="1">
        <name>Mg(2+)</name>
        <dbReference type="ChEBI" id="CHEBI:18420"/>
    </cofactor>
    <cofactor evidence="1">
        <name>Mn(2+)</name>
        <dbReference type="ChEBI" id="CHEBI:29035"/>
    </cofactor>
</comment>
<comment type="subunit">
    <text evidence="1">Homodimer, forms a heterotetramer with a Cas2 homodimer.</text>
</comment>
<comment type="similarity">
    <text evidence="1">Belongs to the CRISPR-associated endonuclease Cas1 family.</text>
</comment>
<accession>Q8RED1</accession>
<protein>
    <recommendedName>
        <fullName evidence="1">CRISPR-associated endonuclease Cas1</fullName>
        <ecNumber evidence="1">3.1.-.-</ecNumber>
    </recommendedName>
</protein>
<name>CAS1_FUSNN</name>
<organism>
    <name type="scientific">Fusobacterium nucleatum subsp. nucleatum (strain ATCC 25586 / DSM 15643 / BCRC 10681 / CIP 101130 / JCM 8532 / KCTC 2640 / LMG 13131 / VPI 4355)</name>
    <dbReference type="NCBI Taxonomy" id="190304"/>
    <lineage>
        <taxon>Bacteria</taxon>
        <taxon>Fusobacteriati</taxon>
        <taxon>Fusobacteriota</taxon>
        <taxon>Fusobacteriia</taxon>
        <taxon>Fusobacteriales</taxon>
        <taxon>Fusobacteriaceae</taxon>
        <taxon>Fusobacterium</taxon>
    </lineage>
</organism>
<feature type="chain" id="PRO_0000417077" description="CRISPR-associated endonuclease Cas1">
    <location>
        <begin position="1"/>
        <end position="338"/>
    </location>
</feature>
<feature type="binding site" evidence="1">
    <location>
        <position position="165"/>
    </location>
    <ligand>
        <name>Mn(2+)</name>
        <dbReference type="ChEBI" id="CHEBI:29035"/>
    </ligand>
</feature>
<feature type="binding site" evidence="1">
    <location>
        <position position="230"/>
    </location>
    <ligand>
        <name>Mn(2+)</name>
        <dbReference type="ChEBI" id="CHEBI:29035"/>
    </ligand>
</feature>
<feature type="binding site" evidence="1">
    <location>
        <position position="245"/>
    </location>
    <ligand>
        <name>Mn(2+)</name>
        <dbReference type="ChEBI" id="CHEBI:29035"/>
    </ligand>
</feature>
<keyword id="KW-0051">Antiviral defense</keyword>
<keyword id="KW-0238">DNA-binding</keyword>
<keyword id="KW-0255">Endonuclease</keyword>
<keyword id="KW-0378">Hydrolase</keyword>
<keyword id="KW-0460">Magnesium</keyword>
<keyword id="KW-0464">Manganese</keyword>
<keyword id="KW-0479">Metal-binding</keyword>
<keyword id="KW-0540">Nuclease</keyword>
<keyword id="KW-1185">Reference proteome</keyword>
<reference key="1">
    <citation type="journal article" date="2002" name="J. Bacteriol.">
        <title>Genome sequence and analysis of the oral bacterium Fusobacterium nucleatum strain ATCC 25586.</title>
        <authorList>
            <person name="Kapatral V."/>
            <person name="Anderson I."/>
            <person name="Ivanova N."/>
            <person name="Reznik G."/>
            <person name="Los T."/>
            <person name="Lykidis A."/>
            <person name="Bhattacharyya A."/>
            <person name="Bartman A."/>
            <person name="Gardner W."/>
            <person name="Grechkin G."/>
            <person name="Zhu L."/>
            <person name="Vasieva O."/>
            <person name="Chu L."/>
            <person name="Kogan Y."/>
            <person name="Chaga O."/>
            <person name="Goltsman E."/>
            <person name="Bernal A."/>
            <person name="Larsen N."/>
            <person name="D'Souza M."/>
            <person name="Walunas T."/>
            <person name="Pusch G."/>
            <person name="Haselkorn R."/>
            <person name="Fonstein M."/>
            <person name="Kyrpides N.C."/>
            <person name="Overbeek R."/>
        </authorList>
    </citation>
    <scope>NUCLEOTIDE SEQUENCE [LARGE SCALE GENOMIC DNA]</scope>
    <source>
        <strain>ATCC 25586 / DSM 15643 / BCRC 10681 / CIP 101130 / JCM 8532 / KCTC 2640 / LMG 13131 / VPI 4355</strain>
    </source>
</reference>
<dbReference type="EC" id="3.1.-.-" evidence="1"/>
<dbReference type="EMBL" id="AE009951">
    <property type="protein sequence ID" value="AAL95373.1"/>
    <property type="molecule type" value="Genomic_DNA"/>
</dbReference>
<dbReference type="RefSeq" id="NP_604074.1">
    <property type="nucleotide sequence ID" value="NC_003454.1"/>
</dbReference>
<dbReference type="SMR" id="Q8RED1"/>
<dbReference type="STRING" id="190304.FN1177"/>
<dbReference type="PaxDb" id="190304-FN1177"/>
<dbReference type="EnsemblBacteria" id="AAL95373">
    <property type="protein sequence ID" value="AAL95373"/>
    <property type="gene ID" value="FN1177"/>
</dbReference>
<dbReference type="KEGG" id="fnu:FN1177"/>
<dbReference type="PATRIC" id="fig|190304.8.peg.1741"/>
<dbReference type="eggNOG" id="COG1518">
    <property type="taxonomic scope" value="Bacteria"/>
</dbReference>
<dbReference type="HOGENOM" id="CLU_052779_2_0_0"/>
<dbReference type="InParanoid" id="Q8RED1"/>
<dbReference type="BioCyc" id="FNUC190304:G1FZS-1755-MONOMER"/>
<dbReference type="Proteomes" id="UP000002521">
    <property type="component" value="Chromosome"/>
</dbReference>
<dbReference type="GO" id="GO:0003677">
    <property type="term" value="F:DNA binding"/>
    <property type="evidence" value="ECO:0007669"/>
    <property type="project" value="UniProtKB-KW"/>
</dbReference>
<dbReference type="GO" id="GO:0004520">
    <property type="term" value="F:DNA endonuclease activity"/>
    <property type="evidence" value="ECO:0007669"/>
    <property type="project" value="InterPro"/>
</dbReference>
<dbReference type="GO" id="GO:0046872">
    <property type="term" value="F:metal ion binding"/>
    <property type="evidence" value="ECO:0007669"/>
    <property type="project" value="UniProtKB-UniRule"/>
</dbReference>
<dbReference type="GO" id="GO:0051607">
    <property type="term" value="P:defense response to virus"/>
    <property type="evidence" value="ECO:0007669"/>
    <property type="project" value="UniProtKB-UniRule"/>
</dbReference>
<dbReference type="GO" id="GO:0043571">
    <property type="term" value="P:maintenance of CRISPR repeat elements"/>
    <property type="evidence" value="ECO:0007669"/>
    <property type="project" value="UniProtKB-UniRule"/>
</dbReference>
<dbReference type="CDD" id="cd09722">
    <property type="entry name" value="Cas1_I-B"/>
    <property type="match status" value="1"/>
</dbReference>
<dbReference type="Gene3D" id="1.20.120.920">
    <property type="entry name" value="CRISPR-associated endonuclease Cas1, C-terminal domain"/>
    <property type="match status" value="1"/>
</dbReference>
<dbReference type="Gene3D" id="3.100.10.20">
    <property type="entry name" value="CRISPR-associated endonuclease Cas1, N-terminal domain"/>
    <property type="match status" value="1"/>
</dbReference>
<dbReference type="HAMAP" id="MF_01470">
    <property type="entry name" value="Cas1"/>
    <property type="match status" value="1"/>
</dbReference>
<dbReference type="InterPro" id="IPR002729">
    <property type="entry name" value="CRISPR-assoc_Cas1"/>
</dbReference>
<dbReference type="InterPro" id="IPR042206">
    <property type="entry name" value="CRISPR-assoc_Cas1_C"/>
</dbReference>
<dbReference type="InterPro" id="IPR019858">
    <property type="entry name" value="CRISPR-assoc_Cas1_HMARI/TNEAP"/>
</dbReference>
<dbReference type="InterPro" id="IPR042211">
    <property type="entry name" value="CRISPR-assoc_Cas1_N"/>
</dbReference>
<dbReference type="NCBIfam" id="TIGR00287">
    <property type="entry name" value="cas1"/>
    <property type="match status" value="1"/>
</dbReference>
<dbReference type="NCBIfam" id="TIGR03641">
    <property type="entry name" value="cas1_HMARI"/>
    <property type="match status" value="1"/>
</dbReference>
<dbReference type="PANTHER" id="PTHR43219">
    <property type="entry name" value="CRISPR-ASSOCIATED ENDONUCLEASE CAS1"/>
    <property type="match status" value="1"/>
</dbReference>
<dbReference type="PANTHER" id="PTHR43219:SF1">
    <property type="entry name" value="CRISPR-ASSOCIATED ENDONUCLEASE CAS1"/>
    <property type="match status" value="1"/>
</dbReference>
<dbReference type="Pfam" id="PF01867">
    <property type="entry name" value="Cas_Cas1"/>
    <property type="match status" value="1"/>
</dbReference>
<evidence type="ECO:0000255" key="1">
    <source>
        <dbReference type="HAMAP-Rule" id="MF_01470"/>
    </source>
</evidence>
<proteinExistence type="inferred from homology"/>
<sequence length="338" mass="40819">MFCIGGVNMKRSFFLYSNGTLKRKDNTITFINEKDEKRDIPIEMVDDFYVMSEMNFNTKFINYISQFGIPIHFFNYYTFYTGSFYPREMNISGQLLVKQVEHYTNEQKRVEIAREFIEGASFNIYRNLRYYNGRGKDLKLYMDQIEELRKHLKEVNNVEELMGYEGNIRKIYYEAWNIIVNQEIDFEKRVKNPPDNMINSLISFVNTLFYTKVLGEIYKTQLNPTVSYLHQPSTRRFSLSLDISEVFKPLIVDRLIFSLLNKNQITEKSFVKDFEYLRLKEDVSKLIVQEFEDRLKQIITHKDLNRKISYQYLVRLECYKLIKHLLGEKKYKSFQMWW</sequence>
<gene>
    <name evidence="1" type="primary">cas1</name>
    <name type="ordered locus">FN1177</name>
</gene>